<dbReference type="EMBL" id="AY122472">
    <property type="protein sequence ID" value="AAM93914.1"/>
    <property type="molecule type" value="mRNA"/>
</dbReference>
<dbReference type="EMBL" id="AY122473">
    <property type="protein sequence ID" value="AAM93915.1"/>
    <property type="molecule type" value="mRNA"/>
</dbReference>
<dbReference type="EMBL" id="AF479698">
    <property type="protein sequence ID" value="AAQ05837.1"/>
    <property type="molecule type" value="mRNA"/>
</dbReference>
<dbReference type="EMBL" id="AY501001">
    <property type="protein sequence ID" value="AAS87295.1"/>
    <property type="molecule type" value="mRNA"/>
</dbReference>
<dbReference type="EMBL" id="AY358860">
    <property type="protein sequence ID" value="AAQ89219.1"/>
    <property type="molecule type" value="mRNA"/>
</dbReference>
<dbReference type="EMBL" id="AL031650">
    <property type="status" value="NOT_ANNOTATED_CDS"/>
    <property type="molecule type" value="Genomic_DNA"/>
</dbReference>
<dbReference type="EMBL" id="AL121751">
    <property type="status" value="NOT_ANNOTATED_CDS"/>
    <property type="molecule type" value="Genomic_DNA"/>
</dbReference>
<dbReference type="EMBL" id="CH471077">
    <property type="protein sequence ID" value="EAW76448.1"/>
    <property type="molecule type" value="Genomic_DNA"/>
</dbReference>
<dbReference type="EMBL" id="CH471077">
    <property type="protein sequence ID" value="EAW76451.1"/>
    <property type="molecule type" value="Genomic_DNA"/>
</dbReference>
<dbReference type="EMBL" id="BC062212">
    <property type="protein sequence ID" value="AAH62212.1"/>
    <property type="molecule type" value="mRNA"/>
</dbReference>
<dbReference type="CCDS" id="CCDS13178.1">
    <molecule id="Q8N690-1"/>
</dbReference>
<dbReference type="CCDS" id="CCDS33455.1">
    <molecule id="Q8N690-2"/>
</dbReference>
<dbReference type="RefSeq" id="NP_001258138.1">
    <property type="nucleotide sequence ID" value="NM_001271209.1"/>
</dbReference>
<dbReference type="RefSeq" id="NP_695021.2">
    <molecule id="Q8N690-1"/>
    <property type="nucleotide sequence ID" value="NM_153289.3"/>
</dbReference>
<dbReference type="RefSeq" id="NP_697018.1">
    <molecule id="Q8N690-2"/>
    <property type="nucleotide sequence ID" value="NM_153323.5"/>
</dbReference>
<dbReference type="BioGRID" id="128846">
    <property type="interactions" value="1"/>
</dbReference>
<dbReference type="IntAct" id="Q8N690">
    <property type="interactions" value="1"/>
</dbReference>
<dbReference type="MINT" id="Q8N690"/>
<dbReference type="iPTMnet" id="Q8N690"/>
<dbReference type="PhosphoSitePlus" id="Q8N690"/>
<dbReference type="BioMuta" id="DEFB119"/>
<dbReference type="DMDM" id="41713338"/>
<dbReference type="MassIVE" id="Q8N690"/>
<dbReference type="PeptideAtlas" id="Q8N690"/>
<dbReference type="ProteomicsDB" id="72143">
    <molecule id="Q8N690-1"/>
</dbReference>
<dbReference type="ProteomicsDB" id="72144">
    <molecule id="Q8N690-2"/>
</dbReference>
<dbReference type="Antibodypedia" id="49716">
    <property type="antibodies" value="57 antibodies from 17 providers"/>
</dbReference>
<dbReference type="DNASU" id="245932"/>
<dbReference type="Ensembl" id="ENST00000339144.3">
    <molecule id="Q8N690-3"/>
    <property type="protein sequence ID" value="ENSP00000345768.3"/>
    <property type="gene ID" value="ENSG00000180483.7"/>
</dbReference>
<dbReference type="Ensembl" id="ENST00000376315.2">
    <molecule id="Q8N690-2"/>
    <property type="protein sequence ID" value="ENSP00000365492.2"/>
    <property type="gene ID" value="ENSG00000180483.7"/>
</dbReference>
<dbReference type="Ensembl" id="ENST00000376321.4">
    <molecule id="Q8N690-1"/>
    <property type="protein sequence ID" value="ENSP00000365499.3"/>
    <property type="gene ID" value="ENSG00000180483.7"/>
</dbReference>
<dbReference type="GeneID" id="245932"/>
<dbReference type="KEGG" id="hsa:245932"/>
<dbReference type="MANE-Select" id="ENST00000376321.4">
    <property type="protein sequence ID" value="ENSP00000365499.3"/>
    <property type="RefSeq nucleotide sequence ID" value="NM_153289.4"/>
    <property type="RefSeq protein sequence ID" value="NP_695021.2"/>
</dbReference>
<dbReference type="UCSC" id="uc002wvt.5">
    <molecule id="Q8N690-1"/>
    <property type="organism name" value="human"/>
</dbReference>
<dbReference type="AGR" id="HGNC:18099"/>
<dbReference type="CTD" id="245932"/>
<dbReference type="DisGeNET" id="245932"/>
<dbReference type="GeneCards" id="DEFB119"/>
<dbReference type="HGNC" id="HGNC:18099">
    <property type="gene designation" value="DEFB119"/>
</dbReference>
<dbReference type="HPA" id="ENSG00000180483">
    <property type="expression patterns" value="Tissue enriched (epididymis)"/>
</dbReference>
<dbReference type="MIM" id="615997">
    <property type="type" value="gene"/>
</dbReference>
<dbReference type="neXtProt" id="NX_Q8N690"/>
<dbReference type="OpenTargets" id="ENSG00000180483"/>
<dbReference type="PharmGKB" id="PA38495"/>
<dbReference type="VEuPathDB" id="HostDB:ENSG00000180483"/>
<dbReference type="GeneTree" id="ENSGT00510000050451"/>
<dbReference type="HOGENOM" id="CLU_3241931_0_0_1"/>
<dbReference type="InParanoid" id="Q8N690"/>
<dbReference type="OMA" id="QENRWPK"/>
<dbReference type="OrthoDB" id="9624411at2759"/>
<dbReference type="PAN-GO" id="Q8N690">
    <property type="GO annotations" value="4 GO annotations based on evolutionary models"/>
</dbReference>
<dbReference type="PhylomeDB" id="Q8N690"/>
<dbReference type="PathwayCommons" id="Q8N690"/>
<dbReference type="Reactome" id="R-HSA-1461957">
    <property type="pathway name" value="Beta defensins"/>
</dbReference>
<dbReference type="Reactome" id="R-HSA-1461973">
    <property type="pathway name" value="Defensins"/>
</dbReference>
<dbReference type="BioGRID-ORCS" id="245932">
    <property type="hits" value="8 hits in 1140 CRISPR screens"/>
</dbReference>
<dbReference type="GeneWiki" id="DEFB119"/>
<dbReference type="GenomeRNAi" id="245932"/>
<dbReference type="Pharos" id="Q8N690">
    <property type="development level" value="Tbio"/>
</dbReference>
<dbReference type="PRO" id="PR:Q8N690"/>
<dbReference type="Proteomes" id="UP000005640">
    <property type="component" value="Chromosome 20"/>
</dbReference>
<dbReference type="RNAct" id="Q8N690">
    <property type="molecule type" value="protein"/>
</dbReference>
<dbReference type="Bgee" id="ENSG00000180483">
    <property type="expression patterns" value="Expressed in corpus epididymis and 110 other cell types or tissues"/>
</dbReference>
<dbReference type="GO" id="GO:0005576">
    <property type="term" value="C:extracellular region"/>
    <property type="evidence" value="ECO:0007669"/>
    <property type="project" value="UniProtKB-SubCell"/>
</dbReference>
<dbReference type="GO" id="GO:0050829">
    <property type="term" value="P:defense response to Gram-negative bacterium"/>
    <property type="evidence" value="ECO:0007669"/>
    <property type="project" value="InterPro"/>
</dbReference>
<dbReference type="GO" id="GO:0050830">
    <property type="term" value="P:defense response to Gram-positive bacterium"/>
    <property type="evidence" value="ECO:0007669"/>
    <property type="project" value="InterPro"/>
</dbReference>
<dbReference type="InterPro" id="IPR028060">
    <property type="entry name" value="Defensin_big_dom"/>
</dbReference>
<dbReference type="PANTHER" id="PTHR47902">
    <property type="entry name" value="BETA-DEFENSIN 119"/>
    <property type="match status" value="1"/>
</dbReference>
<dbReference type="PANTHER" id="PTHR47902:SF1">
    <property type="entry name" value="BETA-DEFENSIN 119"/>
    <property type="match status" value="1"/>
</dbReference>
<dbReference type="Pfam" id="PF14862">
    <property type="entry name" value="Defensin_big"/>
    <property type="match status" value="1"/>
</dbReference>
<protein>
    <recommendedName>
        <fullName>Beta-defensin 119</fullName>
    </recommendedName>
    <alternativeName>
        <fullName>Beta-defensin 120</fullName>
    </alternativeName>
    <alternativeName>
        <fullName>Beta-defensin 19</fullName>
        <shortName>DEFB-19</shortName>
    </alternativeName>
    <alternativeName>
        <fullName>Beta-defensin 20</fullName>
        <shortName>DEFB-20</shortName>
    </alternativeName>
    <alternativeName>
        <fullName>Defensin, beta 119</fullName>
    </alternativeName>
    <alternativeName>
        <fullName>Defensin, beta 120</fullName>
    </alternativeName>
    <alternativeName>
        <fullName>ESC42-RELA</fullName>
    </alternativeName>
</protein>
<feature type="signal peptide" evidence="2">
    <location>
        <begin position="1"/>
        <end position="21"/>
    </location>
</feature>
<feature type="peptide" id="PRO_0000006987" description="Beta-defensin 119">
    <location>
        <begin position="22"/>
        <end position="84"/>
    </location>
</feature>
<feature type="disulfide bond" evidence="1">
    <location>
        <begin position="28"/>
        <end position="55"/>
    </location>
</feature>
<feature type="disulfide bond" evidence="1">
    <location>
        <begin position="35"/>
        <end position="49"/>
    </location>
</feature>
<feature type="disulfide bond" evidence="1">
    <location>
        <begin position="39"/>
        <end position="56"/>
    </location>
</feature>
<feature type="splice variant" id="VSP_029871" description="In isoform 2." evidence="4">
    <original>GKRHILRCMGNSGICRASCKKNEQPYLYCRNCQSCCLQSYMRISISGKEENTDWSYEKQWPRLP</original>
    <variation>VECWMDGHCRLLCKDGEDSIIRCRNRKRCCVPSRYLTIQPVTIHGILGWTTPQMSTTAPKMKTNITNR</variation>
    <location>
        <begin position="21"/>
        <end position="84"/>
    </location>
</feature>
<feature type="splice variant" id="VSP_043188" description="In isoform 3." evidence="5">
    <original>GKRHILRCMGNSGICRASCKKNEQPYLYCRNCQSCCLQSYMRISISGKEENTDWSYEKQWPRLP</original>
    <variation>ALVRTVGCCLDTARQTPHPSMHG</variation>
    <location>
        <begin position="21"/>
        <end position="84"/>
    </location>
</feature>
<accession>Q8N690</accession>
<accession>Q5GRG1</accession>
<accession>Q5JWP1</accession>
<accession>Q5TH42</accession>
<accession>Q8N689</accession>
<proteinExistence type="evidence at protein level"/>
<keyword id="KW-0025">Alternative splicing</keyword>
<keyword id="KW-0044">Antibiotic</keyword>
<keyword id="KW-0929">Antimicrobial</keyword>
<keyword id="KW-0211">Defensin</keyword>
<keyword id="KW-1015">Disulfide bond</keyword>
<keyword id="KW-1267">Proteomics identification</keyword>
<keyword id="KW-1185">Reference proteome</keyword>
<keyword id="KW-0964">Secreted</keyword>
<keyword id="KW-0732">Signal</keyword>
<reference key="1">
    <citation type="journal article" date="2002" name="Proc. Natl. Acad. Sci. U.S.A.">
        <title>Discovery of five conserved beta-defensin gene clusters using a computational search strategy.</title>
        <authorList>
            <person name="Schutte B.C."/>
            <person name="Mitros J.P."/>
            <person name="Bartlett J.A."/>
            <person name="Walters J.D."/>
            <person name="Jia H.P."/>
            <person name="Welsh M.J."/>
            <person name="Casavant T.L."/>
            <person name="McCray P.B. Jr."/>
        </authorList>
    </citation>
    <scope>NUCLEOTIDE SEQUENCE [MRNA] (ISOFORMS 1 AND 2)</scope>
    <scope>IDENTIFICATION</scope>
    <source>
        <tissue>B-cell</tissue>
        <tissue>Fetal lung</tissue>
        <tissue>Testis</tissue>
    </source>
</reference>
<reference key="2">
    <citation type="submission" date="2002-01" db="EMBL/GenBank/DDBJ databases">
        <authorList>
            <person name="Hamil K.G."/>
            <person name="Hall S.H."/>
        </authorList>
    </citation>
    <scope>NUCLEOTIDE SEQUENCE [MRNA] (ISOFORM 1)</scope>
</reference>
<reference key="3">
    <citation type="journal article" date="2005" name="Genes Immun.">
        <title>Identification, characterization, and evolution of a primate beta-defensin gene cluster.</title>
        <authorList>
            <person name="Radhakrishnan Y."/>
            <person name="Hamil K.G."/>
            <person name="Yenugu S."/>
            <person name="Young S.L."/>
            <person name="French F.S."/>
            <person name="Hall S.H."/>
        </authorList>
    </citation>
    <scope>NUCLEOTIDE SEQUENCE [MRNA] (ISOFORM 3)</scope>
    <scope>TISSUE SPECIFICITY</scope>
    <source>
        <tissue>Testis</tissue>
    </source>
</reference>
<reference key="4">
    <citation type="journal article" date="2003" name="Genome Res.">
        <title>The secreted protein discovery initiative (SPDI), a large-scale effort to identify novel human secreted and transmembrane proteins: a bioinformatics assessment.</title>
        <authorList>
            <person name="Clark H.F."/>
            <person name="Gurney A.L."/>
            <person name="Abaya E."/>
            <person name="Baker K."/>
            <person name="Baldwin D.T."/>
            <person name="Brush J."/>
            <person name="Chen J."/>
            <person name="Chow B."/>
            <person name="Chui C."/>
            <person name="Crowley C."/>
            <person name="Currell B."/>
            <person name="Deuel B."/>
            <person name="Dowd P."/>
            <person name="Eaton D."/>
            <person name="Foster J.S."/>
            <person name="Grimaldi C."/>
            <person name="Gu Q."/>
            <person name="Hass P.E."/>
            <person name="Heldens S."/>
            <person name="Huang A."/>
            <person name="Kim H.S."/>
            <person name="Klimowski L."/>
            <person name="Jin Y."/>
            <person name="Johnson S."/>
            <person name="Lee J."/>
            <person name="Lewis L."/>
            <person name="Liao D."/>
            <person name="Mark M.R."/>
            <person name="Robbie E."/>
            <person name="Sanchez C."/>
            <person name="Schoenfeld J."/>
            <person name="Seshagiri S."/>
            <person name="Simmons L."/>
            <person name="Singh J."/>
            <person name="Smith V."/>
            <person name="Stinson J."/>
            <person name="Vagts A."/>
            <person name="Vandlen R.L."/>
            <person name="Watanabe C."/>
            <person name="Wieand D."/>
            <person name="Woods K."/>
            <person name="Xie M.-H."/>
            <person name="Yansura D.G."/>
            <person name="Yi S."/>
            <person name="Yu G."/>
            <person name="Yuan J."/>
            <person name="Zhang M."/>
            <person name="Zhang Z."/>
            <person name="Goddard A.D."/>
            <person name="Wood W.I."/>
            <person name="Godowski P.J."/>
            <person name="Gray A.M."/>
        </authorList>
    </citation>
    <scope>NUCLEOTIDE SEQUENCE [LARGE SCALE MRNA] (ISOFORM 1)</scope>
</reference>
<reference key="5">
    <citation type="journal article" date="2001" name="Nature">
        <title>The DNA sequence and comparative analysis of human chromosome 20.</title>
        <authorList>
            <person name="Deloukas P."/>
            <person name="Matthews L.H."/>
            <person name="Ashurst J.L."/>
            <person name="Burton J."/>
            <person name="Gilbert J.G.R."/>
            <person name="Jones M."/>
            <person name="Stavrides G."/>
            <person name="Almeida J.P."/>
            <person name="Babbage A.K."/>
            <person name="Bagguley C.L."/>
            <person name="Bailey J."/>
            <person name="Barlow K.F."/>
            <person name="Bates K.N."/>
            <person name="Beard L.M."/>
            <person name="Beare D.M."/>
            <person name="Beasley O.P."/>
            <person name="Bird C.P."/>
            <person name="Blakey S.E."/>
            <person name="Bridgeman A.M."/>
            <person name="Brown A.J."/>
            <person name="Buck D."/>
            <person name="Burrill W.D."/>
            <person name="Butler A.P."/>
            <person name="Carder C."/>
            <person name="Carter N.P."/>
            <person name="Chapman J.C."/>
            <person name="Clamp M."/>
            <person name="Clark G."/>
            <person name="Clark L.N."/>
            <person name="Clark S.Y."/>
            <person name="Clee C.M."/>
            <person name="Clegg S."/>
            <person name="Cobley V.E."/>
            <person name="Collier R.E."/>
            <person name="Connor R.E."/>
            <person name="Corby N.R."/>
            <person name="Coulson A."/>
            <person name="Coville G.J."/>
            <person name="Deadman R."/>
            <person name="Dhami P.D."/>
            <person name="Dunn M."/>
            <person name="Ellington A.G."/>
            <person name="Frankland J.A."/>
            <person name="Fraser A."/>
            <person name="French L."/>
            <person name="Garner P."/>
            <person name="Grafham D.V."/>
            <person name="Griffiths C."/>
            <person name="Griffiths M.N.D."/>
            <person name="Gwilliam R."/>
            <person name="Hall R.E."/>
            <person name="Hammond S."/>
            <person name="Harley J.L."/>
            <person name="Heath P.D."/>
            <person name="Ho S."/>
            <person name="Holden J.L."/>
            <person name="Howden P.J."/>
            <person name="Huckle E."/>
            <person name="Hunt A.R."/>
            <person name="Hunt S.E."/>
            <person name="Jekosch K."/>
            <person name="Johnson C.M."/>
            <person name="Johnson D."/>
            <person name="Kay M.P."/>
            <person name="Kimberley A.M."/>
            <person name="King A."/>
            <person name="Knights A."/>
            <person name="Laird G.K."/>
            <person name="Lawlor S."/>
            <person name="Lehvaeslaiho M.H."/>
            <person name="Leversha M.A."/>
            <person name="Lloyd C."/>
            <person name="Lloyd D.M."/>
            <person name="Lovell J.D."/>
            <person name="Marsh V.L."/>
            <person name="Martin S.L."/>
            <person name="McConnachie L.J."/>
            <person name="McLay K."/>
            <person name="McMurray A.A."/>
            <person name="Milne S.A."/>
            <person name="Mistry D."/>
            <person name="Moore M.J.F."/>
            <person name="Mullikin J.C."/>
            <person name="Nickerson T."/>
            <person name="Oliver K."/>
            <person name="Parker A."/>
            <person name="Patel R."/>
            <person name="Pearce T.A.V."/>
            <person name="Peck A.I."/>
            <person name="Phillimore B.J.C.T."/>
            <person name="Prathalingam S.R."/>
            <person name="Plumb R.W."/>
            <person name="Ramsay H."/>
            <person name="Rice C.M."/>
            <person name="Ross M.T."/>
            <person name="Scott C.E."/>
            <person name="Sehra H.K."/>
            <person name="Shownkeen R."/>
            <person name="Sims S."/>
            <person name="Skuce C.D."/>
            <person name="Smith M.L."/>
            <person name="Soderlund C."/>
            <person name="Steward C.A."/>
            <person name="Sulston J.E."/>
            <person name="Swann R.M."/>
            <person name="Sycamore N."/>
            <person name="Taylor R."/>
            <person name="Tee L."/>
            <person name="Thomas D.W."/>
            <person name="Thorpe A."/>
            <person name="Tracey A."/>
            <person name="Tromans A.C."/>
            <person name="Vaudin M."/>
            <person name="Wall M."/>
            <person name="Wallis J.M."/>
            <person name="Whitehead S.L."/>
            <person name="Whittaker P."/>
            <person name="Willey D.L."/>
            <person name="Williams L."/>
            <person name="Williams S.A."/>
            <person name="Wilming L."/>
            <person name="Wray P.W."/>
            <person name="Hubbard T."/>
            <person name="Durbin R.M."/>
            <person name="Bentley D.R."/>
            <person name="Beck S."/>
            <person name="Rogers J."/>
        </authorList>
    </citation>
    <scope>NUCLEOTIDE SEQUENCE [LARGE SCALE GENOMIC DNA]</scope>
</reference>
<reference key="6">
    <citation type="submission" date="2005-09" db="EMBL/GenBank/DDBJ databases">
        <authorList>
            <person name="Mural R.J."/>
            <person name="Istrail S."/>
            <person name="Sutton G.G."/>
            <person name="Florea L."/>
            <person name="Halpern A.L."/>
            <person name="Mobarry C.M."/>
            <person name="Lippert R."/>
            <person name="Walenz B."/>
            <person name="Shatkay H."/>
            <person name="Dew I."/>
            <person name="Miller J.R."/>
            <person name="Flanigan M.J."/>
            <person name="Edwards N.J."/>
            <person name="Bolanos R."/>
            <person name="Fasulo D."/>
            <person name="Halldorsson B.V."/>
            <person name="Hannenhalli S."/>
            <person name="Turner R."/>
            <person name="Yooseph S."/>
            <person name="Lu F."/>
            <person name="Nusskern D.R."/>
            <person name="Shue B.C."/>
            <person name="Zheng X.H."/>
            <person name="Zhong F."/>
            <person name="Delcher A.L."/>
            <person name="Huson D.H."/>
            <person name="Kravitz S.A."/>
            <person name="Mouchard L."/>
            <person name="Reinert K."/>
            <person name="Remington K.A."/>
            <person name="Clark A.G."/>
            <person name="Waterman M.S."/>
            <person name="Eichler E.E."/>
            <person name="Adams M.D."/>
            <person name="Hunkapiller M.W."/>
            <person name="Myers E.W."/>
            <person name="Venter J.C."/>
        </authorList>
    </citation>
    <scope>NUCLEOTIDE SEQUENCE [LARGE SCALE GENOMIC DNA]</scope>
</reference>
<reference key="7">
    <citation type="journal article" date="2004" name="Genome Res.">
        <title>The status, quality, and expansion of the NIH full-length cDNA project: the Mammalian Gene Collection (MGC).</title>
        <authorList>
            <consortium name="The MGC Project Team"/>
        </authorList>
    </citation>
    <scope>NUCLEOTIDE SEQUENCE [LARGE SCALE MRNA] (ISOFORM 1)</scope>
    <source>
        <tissue>Testis</tissue>
    </source>
</reference>
<gene>
    <name type="primary">DEFB119</name>
    <name type="synonym">DEFB120</name>
    <name type="synonym">DEFB19</name>
    <name type="synonym">DEFB20</name>
    <name type="ORF">UNQ2449/PRO5729</name>
</gene>
<evidence type="ECO:0000250" key="1"/>
<evidence type="ECO:0000255" key="2"/>
<evidence type="ECO:0000269" key="3">
    <source>
    </source>
</evidence>
<evidence type="ECO:0000303" key="4">
    <source>
    </source>
</evidence>
<evidence type="ECO:0000303" key="5">
    <source>
    </source>
</evidence>
<evidence type="ECO:0000305" key="6"/>
<name>DB119_HUMAN</name>
<sequence length="84" mass="9822">MKLLYLFLAILLAIEEPVISGKRHILRCMGNSGICRASCKKNEQPYLYCRNCQSCCLQSYMRISISGKEENTDWSYEKQWPRLP</sequence>
<comment type="function">
    <text evidence="6">Has antibacterial activity.</text>
</comment>
<comment type="subcellular location">
    <subcellularLocation>
        <location evidence="6">Secreted</location>
    </subcellularLocation>
</comment>
<comment type="alternative products">
    <event type="alternative splicing"/>
    <isoform>
        <id>Q8N690-1</id>
        <name>1</name>
        <sequence type="displayed"/>
    </isoform>
    <isoform>
        <id>Q8N690-2</id>
        <name>2</name>
        <sequence type="described" ref="VSP_029871"/>
    </isoform>
    <isoform>
        <id>Q8N690-3</id>
        <name>3</name>
        <name>b</name>
        <sequence type="described" ref="VSP_043188"/>
    </isoform>
</comment>
<comment type="tissue specificity">
    <text evidence="3">Abundant expression in the male reproductive tract only. Abundant expressed in testis and the caput region of epididymis, but low in the corpus region.</text>
</comment>
<comment type="miscellaneous">
    <molecule>Isoform 3</molecule>
    <text evidence="6">Abundantly expressed in testis.</text>
</comment>
<comment type="similarity">
    <text evidence="6">Belongs to the beta-defensin family.</text>
</comment>
<organism>
    <name type="scientific">Homo sapiens</name>
    <name type="common">Human</name>
    <dbReference type="NCBI Taxonomy" id="9606"/>
    <lineage>
        <taxon>Eukaryota</taxon>
        <taxon>Metazoa</taxon>
        <taxon>Chordata</taxon>
        <taxon>Craniata</taxon>
        <taxon>Vertebrata</taxon>
        <taxon>Euteleostomi</taxon>
        <taxon>Mammalia</taxon>
        <taxon>Eutheria</taxon>
        <taxon>Euarchontoglires</taxon>
        <taxon>Primates</taxon>
        <taxon>Haplorrhini</taxon>
        <taxon>Catarrhini</taxon>
        <taxon>Hominidae</taxon>
        <taxon>Homo</taxon>
    </lineage>
</organism>